<evidence type="ECO:0000255" key="1">
    <source>
        <dbReference type="HAMAP-Rule" id="MF_00034"/>
    </source>
</evidence>
<accession>Q2RVF7</accession>
<gene>
    <name evidence="1" type="primary">ruvC</name>
    <name type="ordered locus">Rru_A1087</name>
</gene>
<organism>
    <name type="scientific">Rhodospirillum rubrum (strain ATCC 11170 / ATH 1.1.1 / DSM 467 / LMG 4362 / NCIMB 8255 / S1)</name>
    <dbReference type="NCBI Taxonomy" id="269796"/>
    <lineage>
        <taxon>Bacteria</taxon>
        <taxon>Pseudomonadati</taxon>
        <taxon>Pseudomonadota</taxon>
        <taxon>Alphaproteobacteria</taxon>
        <taxon>Rhodospirillales</taxon>
        <taxon>Rhodospirillaceae</taxon>
        <taxon>Rhodospirillum</taxon>
    </lineage>
</organism>
<keyword id="KW-0963">Cytoplasm</keyword>
<keyword id="KW-0227">DNA damage</keyword>
<keyword id="KW-0233">DNA recombination</keyword>
<keyword id="KW-0234">DNA repair</keyword>
<keyword id="KW-0238">DNA-binding</keyword>
<keyword id="KW-0255">Endonuclease</keyword>
<keyword id="KW-0378">Hydrolase</keyword>
<keyword id="KW-0460">Magnesium</keyword>
<keyword id="KW-0479">Metal-binding</keyword>
<keyword id="KW-0540">Nuclease</keyword>
<keyword id="KW-1185">Reference proteome</keyword>
<name>RUVC_RHORT</name>
<protein>
    <recommendedName>
        <fullName evidence="1">Crossover junction endodeoxyribonuclease RuvC</fullName>
        <ecNumber evidence="1">3.1.21.10</ecNumber>
    </recommendedName>
    <alternativeName>
        <fullName evidence="1">Holliday junction nuclease RuvC</fullName>
    </alternativeName>
    <alternativeName>
        <fullName evidence="1">Holliday junction resolvase RuvC</fullName>
    </alternativeName>
</protein>
<proteinExistence type="inferred from homology"/>
<dbReference type="EC" id="3.1.21.10" evidence="1"/>
<dbReference type="EMBL" id="CP000230">
    <property type="protein sequence ID" value="ABC21888.1"/>
    <property type="molecule type" value="Genomic_DNA"/>
</dbReference>
<dbReference type="RefSeq" id="WP_011388842.1">
    <property type="nucleotide sequence ID" value="NC_007643.1"/>
</dbReference>
<dbReference type="RefSeq" id="YP_426175.1">
    <property type="nucleotide sequence ID" value="NC_007643.1"/>
</dbReference>
<dbReference type="SMR" id="Q2RVF7"/>
<dbReference type="STRING" id="269796.Rru_A1087"/>
<dbReference type="EnsemblBacteria" id="ABC21888">
    <property type="protein sequence ID" value="ABC21888"/>
    <property type="gene ID" value="Rru_A1087"/>
</dbReference>
<dbReference type="KEGG" id="rru:Rru_A1087"/>
<dbReference type="PATRIC" id="fig|269796.9.peg.1145"/>
<dbReference type="eggNOG" id="COG0817">
    <property type="taxonomic scope" value="Bacteria"/>
</dbReference>
<dbReference type="HOGENOM" id="CLU_091257_1_0_5"/>
<dbReference type="PhylomeDB" id="Q2RVF7"/>
<dbReference type="Proteomes" id="UP000001929">
    <property type="component" value="Chromosome"/>
</dbReference>
<dbReference type="GO" id="GO:0005737">
    <property type="term" value="C:cytoplasm"/>
    <property type="evidence" value="ECO:0007669"/>
    <property type="project" value="UniProtKB-SubCell"/>
</dbReference>
<dbReference type="GO" id="GO:0048476">
    <property type="term" value="C:Holliday junction resolvase complex"/>
    <property type="evidence" value="ECO:0007669"/>
    <property type="project" value="UniProtKB-UniRule"/>
</dbReference>
<dbReference type="GO" id="GO:0008821">
    <property type="term" value="F:crossover junction DNA endonuclease activity"/>
    <property type="evidence" value="ECO:0007669"/>
    <property type="project" value="UniProtKB-UniRule"/>
</dbReference>
<dbReference type="GO" id="GO:0003677">
    <property type="term" value="F:DNA binding"/>
    <property type="evidence" value="ECO:0007669"/>
    <property type="project" value="UniProtKB-KW"/>
</dbReference>
<dbReference type="GO" id="GO:0000287">
    <property type="term" value="F:magnesium ion binding"/>
    <property type="evidence" value="ECO:0007669"/>
    <property type="project" value="UniProtKB-UniRule"/>
</dbReference>
<dbReference type="GO" id="GO:0006310">
    <property type="term" value="P:DNA recombination"/>
    <property type="evidence" value="ECO:0007669"/>
    <property type="project" value="UniProtKB-UniRule"/>
</dbReference>
<dbReference type="GO" id="GO:0006281">
    <property type="term" value="P:DNA repair"/>
    <property type="evidence" value="ECO:0007669"/>
    <property type="project" value="UniProtKB-UniRule"/>
</dbReference>
<dbReference type="CDD" id="cd16962">
    <property type="entry name" value="RuvC"/>
    <property type="match status" value="1"/>
</dbReference>
<dbReference type="FunFam" id="3.30.420.10:FF:000002">
    <property type="entry name" value="Crossover junction endodeoxyribonuclease RuvC"/>
    <property type="match status" value="1"/>
</dbReference>
<dbReference type="Gene3D" id="3.30.420.10">
    <property type="entry name" value="Ribonuclease H-like superfamily/Ribonuclease H"/>
    <property type="match status" value="1"/>
</dbReference>
<dbReference type="HAMAP" id="MF_00034">
    <property type="entry name" value="RuvC"/>
    <property type="match status" value="1"/>
</dbReference>
<dbReference type="InterPro" id="IPR012337">
    <property type="entry name" value="RNaseH-like_sf"/>
</dbReference>
<dbReference type="InterPro" id="IPR036397">
    <property type="entry name" value="RNaseH_sf"/>
</dbReference>
<dbReference type="InterPro" id="IPR020563">
    <property type="entry name" value="X-over_junc_endoDNase_Mg_BS"/>
</dbReference>
<dbReference type="InterPro" id="IPR002176">
    <property type="entry name" value="X-over_junc_endoDNase_RuvC"/>
</dbReference>
<dbReference type="NCBIfam" id="TIGR00228">
    <property type="entry name" value="ruvC"/>
    <property type="match status" value="1"/>
</dbReference>
<dbReference type="PANTHER" id="PTHR30194">
    <property type="entry name" value="CROSSOVER JUNCTION ENDODEOXYRIBONUCLEASE RUVC"/>
    <property type="match status" value="1"/>
</dbReference>
<dbReference type="PANTHER" id="PTHR30194:SF3">
    <property type="entry name" value="CROSSOVER JUNCTION ENDODEOXYRIBONUCLEASE RUVC"/>
    <property type="match status" value="1"/>
</dbReference>
<dbReference type="Pfam" id="PF02075">
    <property type="entry name" value="RuvC"/>
    <property type="match status" value="1"/>
</dbReference>
<dbReference type="PRINTS" id="PR00696">
    <property type="entry name" value="RSOLVASERUVC"/>
</dbReference>
<dbReference type="SUPFAM" id="SSF53098">
    <property type="entry name" value="Ribonuclease H-like"/>
    <property type="match status" value="1"/>
</dbReference>
<dbReference type="PROSITE" id="PS01321">
    <property type="entry name" value="RUVC"/>
    <property type="match status" value="1"/>
</dbReference>
<sequence>MRLLGLDPGLRITGWGVIEVTGNRIGHVADGVVRSDDRLSLAARLAQLHGGIVAVLKAYEPVEAAVEETFVNRNPASTLKLGQARGAVMLAPALAGLVVAEYQPSVVKKAVVGTGGAAKDQVGMMIRTLLPGATLETADAADALAIAICHAHYRAGALSLALARAGGGR</sequence>
<comment type="function">
    <text evidence="1">The RuvA-RuvB-RuvC complex processes Holliday junction (HJ) DNA during genetic recombination and DNA repair. Endonuclease that resolves HJ intermediates. Cleaves cruciform DNA by making single-stranded nicks across the HJ at symmetrical positions within the homologous arms, yielding a 5'-phosphate and a 3'-hydroxyl group; requires a central core of homology in the junction. The consensus cleavage sequence is 5'-(A/T)TT(C/G)-3'. Cleavage occurs on the 3'-side of the TT dinucleotide at the point of strand exchange. HJ branch migration catalyzed by RuvA-RuvB allows RuvC to scan DNA until it finds its consensus sequence, where it cleaves and resolves the cruciform DNA.</text>
</comment>
<comment type="catalytic activity">
    <reaction evidence="1">
        <text>Endonucleolytic cleavage at a junction such as a reciprocal single-stranded crossover between two homologous DNA duplexes (Holliday junction).</text>
        <dbReference type="EC" id="3.1.21.10"/>
    </reaction>
</comment>
<comment type="cofactor">
    <cofactor evidence="1">
        <name>Mg(2+)</name>
        <dbReference type="ChEBI" id="CHEBI:18420"/>
    </cofactor>
    <text evidence="1">Binds 2 Mg(2+) ion per subunit.</text>
</comment>
<comment type="subunit">
    <text evidence="1">Homodimer which binds Holliday junction (HJ) DNA. The HJ becomes 2-fold symmetrical on binding to RuvC with unstacked arms; it has a different conformation from HJ DNA in complex with RuvA. In the full resolvosome a probable DNA-RuvA(4)-RuvB(12)-RuvC(2) complex forms which resolves the HJ.</text>
</comment>
<comment type="subcellular location">
    <subcellularLocation>
        <location evidence="1">Cytoplasm</location>
    </subcellularLocation>
</comment>
<comment type="similarity">
    <text evidence="1">Belongs to the RuvC family.</text>
</comment>
<reference key="1">
    <citation type="journal article" date="2011" name="Stand. Genomic Sci.">
        <title>Complete genome sequence of Rhodospirillum rubrum type strain (S1).</title>
        <authorList>
            <person name="Munk A.C."/>
            <person name="Copeland A."/>
            <person name="Lucas S."/>
            <person name="Lapidus A."/>
            <person name="Del Rio T.G."/>
            <person name="Barry K."/>
            <person name="Detter J.C."/>
            <person name="Hammon N."/>
            <person name="Israni S."/>
            <person name="Pitluck S."/>
            <person name="Brettin T."/>
            <person name="Bruce D."/>
            <person name="Han C."/>
            <person name="Tapia R."/>
            <person name="Gilna P."/>
            <person name="Schmutz J."/>
            <person name="Larimer F."/>
            <person name="Land M."/>
            <person name="Kyrpides N.C."/>
            <person name="Mavromatis K."/>
            <person name="Richardson P."/>
            <person name="Rohde M."/>
            <person name="Goeker M."/>
            <person name="Klenk H.P."/>
            <person name="Zhang Y."/>
            <person name="Roberts G.P."/>
            <person name="Reslewic S."/>
            <person name="Schwartz D.C."/>
        </authorList>
    </citation>
    <scope>NUCLEOTIDE SEQUENCE [LARGE SCALE GENOMIC DNA]</scope>
    <source>
        <strain>ATCC 11170 / ATH 1.1.1 / DSM 467 / LMG 4362 / NCIMB 8255 / S1</strain>
    </source>
</reference>
<feature type="chain" id="PRO_1000002814" description="Crossover junction endodeoxyribonuclease RuvC">
    <location>
        <begin position="1"/>
        <end position="169"/>
    </location>
</feature>
<feature type="active site" evidence="1">
    <location>
        <position position="7"/>
    </location>
</feature>
<feature type="active site" evidence="1">
    <location>
        <position position="67"/>
    </location>
</feature>
<feature type="active site" evidence="1">
    <location>
        <position position="139"/>
    </location>
</feature>
<feature type="binding site" evidence="1">
    <location>
        <position position="7"/>
    </location>
    <ligand>
        <name>Mg(2+)</name>
        <dbReference type="ChEBI" id="CHEBI:18420"/>
        <label>1</label>
    </ligand>
</feature>
<feature type="binding site" evidence="1">
    <location>
        <position position="67"/>
    </location>
    <ligand>
        <name>Mg(2+)</name>
        <dbReference type="ChEBI" id="CHEBI:18420"/>
        <label>2</label>
    </ligand>
</feature>
<feature type="binding site" evidence="1">
    <location>
        <position position="139"/>
    </location>
    <ligand>
        <name>Mg(2+)</name>
        <dbReference type="ChEBI" id="CHEBI:18420"/>
        <label>1</label>
    </ligand>
</feature>